<proteinExistence type="evidence at protein level"/>
<accession>Q9BX84</accession>
<accession>Q6VPR8</accession>
<accession>Q6VPR9</accession>
<accession>Q6VPS0</accession>
<accession>Q6VPS1</accession>
<accession>Q6VPS2</accession>
<evidence type="ECO:0000250" key="1"/>
<evidence type="ECO:0000250" key="2">
    <source>
        <dbReference type="UniProtKB" id="Q8CIR4"/>
    </source>
</evidence>
<evidence type="ECO:0000250" key="3">
    <source>
        <dbReference type="UniProtKB" id="Q923J1"/>
    </source>
</evidence>
<evidence type="ECO:0000255" key="4"/>
<evidence type="ECO:0000255" key="5">
    <source>
        <dbReference type="PROSITE-ProRule" id="PRU00501"/>
    </source>
</evidence>
<evidence type="ECO:0000256" key="6">
    <source>
        <dbReference type="SAM" id="MobiDB-lite"/>
    </source>
</evidence>
<evidence type="ECO:0000269" key="7">
    <source>
    </source>
</evidence>
<evidence type="ECO:0000269" key="8">
    <source>
    </source>
</evidence>
<evidence type="ECO:0000269" key="9">
    <source>
    </source>
</evidence>
<evidence type="ECO:0000269" key="10">
    <source>
    </source>
</evidence>
<evidence type="ECO:0000269" key="11">
    <source>
    </source>
</evidence>
<evidence type="ECO:0000269" key="12">
    <source>
    </source>
</evidence>
<evidence type="ECO:0000269" key="13">
    <source>
    </source>
</evidence>
<evidence type="ECO:0000269" key="14">
    <source>
    </source>
</evidence>
<evidence type="ECO:0000269" key="15">
    <source>
    </source>
</evidence>
<evidence type="ECO:0000269" key="16">
    <source>
    </source>
</evidence>
<evidence type="ECO:0000269" key="17">
    <source>
    </source>
</evidence>
<evidence type="ECO:0000303" key="18">
    <source>
    </source>
</evidence>
<evidence type="ECO:0000303" key="19">
    <source>
    </source>
</evidence>
<evidence type="ECO:0000305" key="20"/>
<sequence length="2022" mass="231708">MKEQPVLERLQSQKSWIKGVFDKRECSTIIPSSKNPHRCTPVCQVCQNLIRCYCGRLIGDHAGIDYSWTISAAKGKESEQWSVEKHTTKSPTDTFGTINFQDGEHTHHAKYIRTSYDTKLDHLLHLMLKEWKMELPKLVISVHGGIQNFTMPSKFKEIFSQGLVKAAETTGAWIITEGINTGVSKHVGDALKSHSSHSLRKIWTVGIPPWGVIENQRDLIGKDVVCLYQTLDNPLSKLTTLNSMHSHFILSDDGTVGKYGNEMKLRRNLEKYLSLQKIHCRSRQGVPVVGLVVEGGPNVILSVWETVKDKDPVVVCEGTGRAADLLAFTHKHLADEGMLRPQVKEEIICMIQNTFNFSLKQSKHLFQILMECMVHRDCITIFDADSEEQQDLDLAILTALLKGTNLSASEQLNLAMAWDRVDIAKKHILIYEQHWKPDALEQAMSDALVMDRVDFVKLLIEYGVNLHRFLTIPRLEELYNTKQGPTNTLLHHLVQDVKQHTLLSGYRITLIDIGLVVEYLIGRAYRSNYTRKHFRALYNNLYRKYKHQRHSSGNRNESAESTLHSQFIRTAQPYKFKEKSIVLHKSRKKSKEQNVSDDPESTGFLYPYNDLLVWAVLMKRQKMAMFFWQHGEEATVKAVIACILYRAMAHEAKESHMVDDASEELKNYSKQFGQLALDLLEKAFKQNERMAMTLLTYELRNWSNSTCLKLAVSGGLRPFVSHTCTQMLLTDMWMGRLKMRKNSWLKIIISIILPPTILTLEFKSKAEMSHVPQSQDFQFMWYYSDQNASSSKESASVKEYDLERGHDEKLDENQHFGLESGHQHLPWTRKVYEFYSAPIVKFWFYTMAYLAFLMLFTYTVLVEMQPQPSVQEWLVSIYIFTNAIEVVREICISEPGKFTQKVKVWISEYWNLTETVAIGLFSAGFVLRWGDPPFHTAGRLIYCIDIIFWFSRLLDFFAVNQHAGPYVTMIAKMTANMFYIVIIMAIVLLSFGVARKAILSPKEPPSWSLARDIVFEPYWMIYGEVYAGEIDVCSSQPSCPPGSFLTPFLQAVYLFVQYIIMVNLLIAFFNNVYLDMESISNNLWKYNRYRYIMTYHEKPWLPPPLILLSHVGLLLRRLCCHRAPHDQEEGDVGLKLYLSKEDLKKLHDFEEQCVEKYFHEKMEDVNCSCEERIRVTSERVTEMYFQLKEMNEKVSFIKDSLLSLDSQVGHLQDLSALTVDTLKVLSAVDTLQEDEALLAKRKHSTCKKLPHSWSNVICAEVLGSMEIAGEKKYQYYSMPSSLLRSLAGGRHPPRVQRGALLEITNSKREATNVRNDQERQETQSSIVVSGVSPNRQAHSKYGQFLLVPSNLKRVPFSAETVLPLSRPSVPDVLATEQDIQTEVLVHLTGQTPVVSDWASVDEPKEKHEPIAHLLDGQDKAEQVLPTLSCTPEPMTMSSPLSQAKIMQTGGGYVNWAFSEGDETGVFSIKKKWQTCLPSTCDSDSSRSEQHQKQAQDSSLSDNSTRSAQSSECSEVGPWLQPNTSFWINPLRRYRPFARSHSFRFHKEEKLMKICKIKNLSGSSEIGQGAWVKAKMLTKDRRLSKKKKNTQGLQVPIITVNACSQSDQLNPEPGENSISEEEYSKNWFTVSKFSHTGVEPYIHQKMKTKEIGQCAIQISDYLKQSQEDLSKNSLWNSRSTNLNRNSLLKSSIGVDKISASLKSPQEPHHHYSAIERNNLMRLSQTIPFTPVQLFAGEEITVYRLEESSPLNLDKSMSSWSQRGRAAMIQVLSREEMDGGLRKAMRVVSTWSEDDILKPGQVFIVKSFLPEVVRTWHKIFQESTVLHLCLREIQQQRAAQKLIYTFNQVKPQTIPYTPRFLEVFLIYCHSANQWLTIEKYMTGEFRKYNNNNGDEITPTNTLEELMLAFSHWTYEYTRGELLVLDLQGVGENLTDPSVIKPEVKQSRGMVFGPANLGEDAIRNFIAKHHCNSCCRKLKLPDLKRNDYSPERINSTFGLEIKIESAEEPPARETGRNSPEDDMQL</sequence>
<reference key="1">
    <citation type="journal article" date="2001" name="Mol. Biol. (Mosk.)">
        <title>Novel type of signaling molecules: protein kinases covalently linked to ion channels.</title>
        <authorList>
            <person name="Riazanova L.V."/>
            <person name="Pavur K.S."/>
            <person name="Petrov A.N."/>
            <person name="Dorovkov M.V."/>
            <person name="Riazanov A.G."/>
        </authorList>
    </citation>
    <scope>NUCLEOTIDE SEQUENCE [MRNA] (ISOFORM TRPM6A)</scope>
    <source>
        <tissue>Kidney</tissue>
    </source>
</reference>
<reference key="2">
    <citation type="journal article" date="2002" name="Nat. Genet.">
        <title>Hypomagnesemia with secondary hypocalcemia is caused by mutations in TRPM6, a new member of the TRPM gene family.</title>
        <authorList>
            <person name="Schlingmann K.P."/>
            <person name="Weber S."/>
            <person name="Peters M."/>
            <person name="Niemann Nejsum L.N."/>
            <person name="Vitzthum H."/>
            <person name="Klingel K."/>
            <person name="Kratz M."/>
            <person name="Haddad E."/>
            <person name="Ristoff E."/>
            <person name="Dinour D."/>
            <person name="Syrrou M."/>
            <person name="Nielsen S."/>
            <person name="Sassen M.C."/>
            <person name="Waldegger S."/>
            <person name="Seyberth H.W."/>
            <person name="Konrad M."/>
        </authorList>
    </citation>
    <scope>NUCLEOTIDE SEQUENCE [MRNA] (ISOFORM TRPM6A)</scope>
    <scope>VARIANT HOMG1 LEU-141</scope>
    <source>
        <tissue>Kidney</tissue>
        <tissue>Small intestine</tissue>
    </source>
</reference>
<reference key="3">
    <citation type="journal article" date="2004" name="Proc. Natl. Acad. Sci. U.S.A.">
        <title>Disruption of TRPM6/TRPM7 complex formation by a mutation in the TRPM6 gene causes hypomagnesemia with secondary hypocalcemia.</title>
        <authorList>
            <person name="Chubanov V."/>
            <person name="Waldegger S."/>
            <person name="Mederos y Schnitzler M."/>
            <person name="Vitzthum H."/>
            <person name="Sassen M.C."/>
            <person name="Seyberth H.W."/>
            <person name="Konrad M."/>
            <person name="Gudermann T."/>
        </authorList>
    </citation>
    <scope>NUCLEOTIDE SEQUENCE [MRNA] (ISOFORMS TRPM6A; TRPM6B; TRPM6C; TRPM6T; M6-KINASE 1; M6-KINASE 2 AND M6-KINASE 3)</scope>
    <scope>CHARACTERIZATION OF VARIANT HOMG1 LEU-141</scope>
    <scope>INTERACTION WITH TRPM7</scope>
    <scope>SUBUNIT</scope>
    <source>
        <tissue>Lung cancer</tissue>
    </source>
</reference>
<reference key="4">
    <citation type="journal article" date="2004" name="Nature">
        <title>DNA sequence and analysis of human chromosome 9.</title>
        <authorList>
            <person name="Humphray S.J."/>
            <person name="Oliver K."/>
            <person name="Hunt A.R."/>
            <person name="Plumb R.W."/>
            <person name="Loveland J.E."/>
            <person name="Howe K.L."/>
            <person name="Andrews T.D."/>
            <person name="Searle S."/>
            <person name="Hunt S.E."/>
            <person name="Scott C.E."/>
            <person name="Jones M.C."/>
            <person name="Ainscough R."/>
            <person name="Almeida J.P."/>
            <person name="Ambrose K.D."/>
            <person name="Ashwell R.I.S."/>
            <person name="Babbage A.K."/>
            <person name="Babbage S."/>
            <person name="Bagguley C.L."/>
            <person name="Bailey J."/>
            <person name="Banerjee R."/>
            <person name="Barker D.J."/>
            <person name="Barlow K.F."/>
            <person name="Bates K."/>
            <person name="Beasley H."/>
            <person name="Beasley O."/>
            <person name="Bird C.P."/>
            <person name="Bray-Allen S."/>
            <person name="Brown A.J."/>
            <person name="Brown J.Y."/>
            <person name="Burford D."/>
            <person name="Burrill W."/>
            <person name="Burton J."/>
            <person name="Carder C."/>
            <person name="Carter N.P."/>
            <person name="Chapman J.C."/>
            <person name="Chen Y."/>
            <person name="Clarke G."/>
            <person name="Clark S.Y."/>
            <person name="Clee C.M."/>
            <person name="Clegg S."/>
            <person name="Collier R.E."/>
            <person name="Corby N."/>
            <person name="Crosier M."/>
            <person name="Cummings A.T."/>
            <person name="Davies J."/>
            <person name="Dhami P."/>
            <person name="Dunn M."/>
            <person name="Dutta I."/>
            <person name="Dyer L.W."/>
            <person name="Earthrowl M.E."/>
            <person name="Faulkner L."/>
            <person name="Fleming C.J."/>
            <person name="Frankish A."/>
            <person name="Frankland J.A."/>
            <person name="French L."/>
            <person name="Fricker D.G."/>
            <person name="Garner P."/>
            <person name="Garnett J."/>
            <person name="Ghori J."/>
            <person name="Gilbert J.G.R."/>
            <person name="Glison C."/>
            <person name="Grafham D.V."/>
            <person name="Gribble S."/>
            <person name="Griffiths C."/>
            <person name="Griffiths-Jones S."/>
            <person name="Grocock R."/>
            <person name="Guy J."/>
            <person name="Hall R.E."/>
            <person name="Hammond S."/>
            <person name="Harley J.L."/>
            <person name="Harrison E.S.I."/>
            <person name="Hart E.A."/>
            <person name="Heath P.D."/>
            <person name="Henderson C.D."/>
            <person name="Hopkins B.L."/>
            <person name="Howard P.J."/>
            <person name="Howden P.J."/>
            <person name="Huckle E."/>
            <person name="Johnson C."/>
            <person name="Johnson D."/>
            <person name="Joy A.A."/>
            <person name="Kay M."/>
            <person name="Keenan S."/>
            <person name="Kershaw J.K."/>
            <person name="Kimberley A.M."/>
            <person name="King A."/>
            <person name="Knights A."/>
            <person name="Laird G.K."/>
            <person name="Langford C."/>
            <person name="Lawlor S."/>
            <person name="Leongamornlert D.A."/>
            <person name="Leversha M."/>
            <person name="Lloyd C."/>
            <person name="Lloyd D.M."/>
            <person name="Lovell J."/>
            <person name="Martin S."/>
            <person name="Mashreghi-Mohammadi M."/>
            <person name="Matthews L."/>
            <person name="McLaren S."/>
            <person name="McLay K.E."/>
            <person name="McMurray A."/>
            <person name="Milne S."/>
            <person name="Nickerson T."/>
            <person name="Nisbett J."/>
            <person name="Nordsiek G."/>
            <person name="Pearce A.V."/>
            <person name="Peck A.I."/>
            <person name="Porter K.M."/>
            <person name="Pandian R."/>
            <person name="Pelan S."/>
            <person name="Phillimore B."/>
            <person name="Povey S."/>
            <person name="Ramsey Y."/>
            <person name="Rand V."/>
            <person name="Scharfe M."/>
            <person name="Sehra H.K."/>
            <person name="Shownkeen R."/>
            <person name="Sims S.K."/>
            <person name="Skuce C.D."/>
            <person name="Smith M."/>
            <person name="Steward C.A."/>
            <person name="Swarbreck D."/>
            <person name="Sycamore N."/>
            <person name="Tester J."/>
            <person name="Thorpe A."/>
            <person name="Tracey A."/>
            <person name="Tromans A."/>
            <person name="Thomas D.W."/>
            <person name="Wall M."/>
            <person name="Wallis J.M."/>
            <person name="West A.P."/>
            <person name="Whitehead S.L."/>
            <person name="Willey D.L."/>
            <person name="Williams S.A."/>
            <person name="Wilming L."/>
            <person name="Wray P.W."/>
            <person name="Young L."/>
            <person name="Ashurst J.L."/>
            <person name="Coulson A."/>
            <person name="Blocker H."/>
            <person name="Durbin R.M."/>
            <person name="Sulston J.E."/>
            <person name="Hubbard T."/>
            <person name="Jackson M.J."/>
            <person name="Bentley D.R."/>
            <person name="Beck S."/>
            <person name="Rogers J."/>
            <person name="Dunham I."/>
        </authorList>
    </citation>
    <scope>NUCLEOTIDE SEQUENCE [LARGE SCALE GENOMIC DNA]</scope>
</reference>
<reference key="5">
    <citation type="journal article" date="2004" name="J. Biol. Chem.">
        <title>TRPM6 forms the Mg2+ influx channel involved in intestinal and renal Mg2+ absorption.</title>
        <authorList>
            <person name="Voets T."/>
            <person name="Nilius B."/>
            <person name="Hoefs S."/>
            <person name="van der Kemp A.W."/>
            <person name="Droogmans G."/>
            <person name="Bindels R.J."/>
            <person name="Hoenderop J.G."/>
        </authorList>
    </citation>
    <scope>FUNCTION</scope>
    <scope>TRANSPORTER ACTIVITY</scope>
    <scope>ACTIVITY REGULATION</scope>
    <scope>SUBCELLULAR LOCATION</scope>
</reference>
<reference key="6">
    <citation type="journal article" date="2006" name="J. Gen. Physiol.">
        <title>Functional characterization of homo- and heteromeric channel kinases TRPM6 and TRPM7.</title>
        <authorList>
            <person name="Li M."/>
            <person name="Jiang J."/>
            <person name="Yue L."/>
        </authorList>
    </citation>
    <scope>FUNCTION</scope>
    <scope>TRANSPORTER ACTIVITY</scope>
    <scope>ACTIVITY REGULATION</scope>
    <scope>SUBUNIT</scope>
    <scope>CHARACTERIZATION OF VARIANT HOMG1 LEU-141</scope>
</reference>
<reference key="7">
    <citation type="journal article" date="2007" name="J. Biol. Chem.">
        <title>Hypomagnesemia with secondary hypocalcemia due to a missense mutation in the putative pore-forming region of TRPM6.</title>
        <authorList>
            <person name="Chubanov V."/>
            <person name="Schlingmann K.P."/>
            <person name="Waering J."/>
            <person name="Heinzinger J."/>
            <person name="Kaske S."/>
            <person name="Waldegger S."/>
            <person name="Mederos y Schnitzler M."/>
            <person name="Gudermann T."/>
        </authorList>
    </citation>
    <scope>SUBUNIT</scope>
    <scope>VARIANT HOMG1 ARG-1017</scope>
</reference>
<reference key="8">
    <citation type="journal article" date="2008" name="PLoS ONE">
        <title>Massive autophosphorylation of the Ser/Thr-rich domain controls protein kinase activity of TRPM6 and TRPM7.</title>
        <authorList>
            <person name="Clark K."/>
            <person name="Middelbeek J."/>
            <person name="Morrice N.A."/>
            <person name="Figdor C.G."/>
            <person name="Lasonder E."/>
            <person name="van Leeuwen F.N."/>
        </authorList>
    </citation>
    <scope>FUNCTION</scope>
    <scope>CATALYTIC ACTIVITY</scope>
    <scope>ACTIVITY REGULATION</scope>
</reference>
<reference key="9">
    <citation type="journal article" date="2008" name="Curr. Biol.">
        <title>RACK1 inhibits TRPM6 activity via phosphorylation of the fused alpha-kinase domain.</title>
        <authorList>
            <person name="Cao G."/>
            <person name="Thebault S."/>
            <person name="van der Wijst J."/>
            <person name="van der Kemp A."/>
            <person name="Lasonder E."/>
            <person name="Bindels R.J."/>
            <person name="Hoenderop J.G."/>
        </authorList>
    </citation>
    <scope>CATALYTIC ACTIVITY</scope>
    <scope>ACTIVITY REGULATION</scope>
    <scope>INTERACTION WITH RACK1</scope>
    <scope>PHOSPHORYLATION AT THR-1851</scope>
    <scope>MUTAGENESIS OF LYS-1804 AND THR-1851</scope>
</reference>
<reference key="10">
    <citation type="journal article" date="2014" name="J. Biol. Chem.">
        <title>The TRPM6 kinase domain determines the Mg.ATP sensitivity of TRPM7/M6 heteromeric ion channels.</title>
        <authorList>
            <person name="Zhang Z."/>
            <person name="Yu H."/>
            <person name="Huang J."/>
            <person name="Faouzi M."/>
            <person name="Schmitz C."/>
            <person name="Penner R."/>
            <person name="Fleig A."/>
        </authorList>
    </citation>
    <scope>FUNCTION</scope>
    <scope>ACTIVITY REGULATION</scope>
</reference>
<reference key="11">
    <citation type="journal article" date="2017" name="Proc. Natl. Acad. Sci. U.S.A.">
        <title>Histone phosphorylation by TRPM6's cleaved kinase attenuates adjacent arginine methylation to regulate gene expression.</title>
        <authorList>
            <person name="Krapivinsky G."/>
            <person name="Krapivinsky L."/>
            <person name="Renthal N.E."/>
            <person name="Santa-Cruz A."/>
            <person name="Manasian Y."/>
            <person name="Clapham D.E."/>
        </authorList>
    </citation>
    <scope>FUNCTION</scope>
    <scope>SUBCELLULAR LOCATION</scope>
    <scope>MUTAGENESIS OF 1063-ASN--LEU-1065</scope>
</reference>
<reference key="12">
    <citation type="journal article" date="2007" name="Nature">
        <title>Patterns of somatic mutation in human cancer genomes.</title>
        <authorList>
            <person name="Greenman C."/>
            <person name="Stephens P."/>
            <person name="Smith R."/>
            <person name="Dalgliesh G.L."/>
            <person name="Hunter C."/>
            <person name="Bignell G."/>
            <person name="Davies H."/>
            <person name="Teague J."/>
            <person name="Butler A."/>
            <person name="Stevens C."/>
            <person name="Edkins S."/>
            <person name="O'Meara S."/>
            <person name="Vastrik I."/>
            <person name="Schmidt E.E."/>
            <person name="Avis T."/>
            <person name="Barthorpe S."/>
            <person name="Bhamra G."/>
            <person name="Buck G."/>
            <person name="Choudhury B."/>
            <person name="Clements J."/>
            <person name="Cole J."/>
            <person name="Dicks E."/>
            <person name="Forbes S."/>
            <person name="Gray K."/>
            <person name="Halliday K."/>
            <person name="Harrison R."/>
            <person name="Hills K."/>
            <person name="Hinton J."/>
            <person name="Jenkinson A."/>
            <person name="Jones D."/>
            <person name="Menzies A."/>
            <person name="Mironenko T."/>
            <person name="Perry J."/>
            <person name="Raine K."/>
            <person name="Richardson D."/>
            <person name="Shepherd R."/>
            <person name="Small A."/>
            <person name="Tofts C."/>
            <person name="Varian J."/>
            <person name="Webb T."/>
            <person name="West S."/>
            <person name="Widaa S."/>
            <person name="Yates A."/>
            <person name="Cahill D.P."/>
            <person name="Louis D.N."/>
            <person name="Goldstraw P."/>
            <person name="Nicholson A.G."/>
            <person name="Brasseur F."/>
            <person name="Looijenga L."/>
            <person name="Weber B.L."/>
            <person name="Chiew Y.-E."/>
            <person name="DeFazio A."/>
            <person name="Greaves M.F."/>
            <person name="Green A.R."/>
            <person name="Campbell P."/>
            <person name="Birney E."/>
            <person name="Easton D.F."/>
            <person name="Chenevix-Trench G."/>
            <person name="Tan M.-H."/>
            <person name="Khoo S.K."/>
            <person name="Teh B.T."/>
            <person name="Yuen S.T."/>
            <person name="Leung S.Y."/>
            <person name="Wooster R."/>
            <person name="Futreal P.A."/>
            <person name="Stratton M.R."/>
        </authorList>
    </citation>
    <scope>VARIANTS [LARGE SCALE ANALYSIS] VAL-75; ILE-338; CYS-1007; ARG-1243; ARG-1274; ILE-1393; GLU-1584; ARG-1663; SER-1673 AND ILE-1724</scope>
</reference>
<reference key="13">
    <citation type="journal article" date="2014" name="Eur. J. Hum. Genet.">
        <title>New TRPM6 missense mutations linked to hypomagnesemia with secondary hypocalcemia.</title>
        <authorList>
            <person name="Lainez S."/>
            <person name="Schlingmann K.P."/>
            <person name="van der Wijst J."/>
            <person name="Dworniczak B."/>
            <person name="van Zeeland F."/>
            <person name="Konrad M."/>
            <person name="Bindels R.J."/>
            <person name="Hoenderop J.G."/>
        </authorList>
    </citation>
    <scope>VARIANTS HOMG1 PRO-708; GLY-872; CYS-1053; PRO-1143 AND ASN-1754</scope>
    <scope>VARIANT ARG-1663</scope>
    <scope>CHARACTERIZATION OF VARIANTS HOMG1 PRO-708; GLY-872; CYS-1053; PRO-1143 AND ASN-1754</scope>
    <scope>CHARACTERIZATION OF VARIANT ARG-1663</scope>
    <scope>SUBCELLULAR LOCATION</scope>
</reference>
<organism>
    <name type="scientific">Homo sapiens</name>
    <name type="common">Human</name>
    <dbReference type="NCBI Taxonomy" id="9606"/>
    <lineage>
        <taxon>Eukaryota</taxon>
        <taxon>Metazoa</taxon>
        <taxon>Chordata</taxon>
        <taxon>Craniata</taxon>
        <taxon>Vertebrata</taxon>
        <taxon>Euteleostomi</taxon>
        <taxon>Mammalia</taxon>
        <taxon>Eutheria</taxon>
        <taxon>Euarchontoglires</taxon>
        <taxon>Primates</taxon>
        <taxon>Haplorrhini</taxon>
        <taxon>Catarrhini</taxon>
        <taxon>Hominidae</taxon>
        <taxon>Homo</taxon>
    </lineage>
</organism>
<keyword id="KW-0025">Alternative splicing</keyword>
<keyword id="KW-0067">ATP-binding</keyword>
<keyword id="KW-0106">Calcium</keyword>
<keyword id="KW-0107">Calcium channel</keyword>
<keyword id="KW-0109">Calcium transport</keyword>
<keyword id="KW-1003">Cell membrane</keyword>
<keyword id="KW-0225">Disease variant</keyword>
<keyword id="KW-0407">Ion channel</keyword>
<keyword id="KW-0406">Ion transport</keyword>
<keyword id="KW-0418">Kinase</keyword>
<keyword id="KW-0472">Membrane</keyword>
<keyword id="KW-0479">Metal-binding</keyword>
<keyword id="KW-0547">Nucleotide-binding</keyword>
<keyword id="KW-0539">Nucleus</keyword>
<keyword id="KW-0597">Phosphoprotein</keyword>
<keyword id="KW-0982">Primary hypomagnesemia</keyword>
<keyword id="KW-1267">Proteomics identification</keyword>
<keyword id="KW-1185">Reference proteome</keyword>
<keyword id="KW-0723">Serine/threonine-protein kinase</keyword>
<keyword id="KW-0808">Transferase</keyword>
<keyword id="KW-0812">Transmembrane</keyword>
<keyword id="KW-1133">Transmembrane helix</keyword>
<keyword id="KW-0813">Transport</keyword>
<keyword id="KW-0862">Zinc</keyword>
<protein>
    <recommendedName>
        <fullName>Transient receptor potential cation channel subfamily M member 6</fullName>
        <ecNumber evidence="13 14">2.7.11.1</ecNumber>
    </recommendedName>
    <alternativeName>
        <fullName>Channel kinase 2</fullName>
    </alternativeName>
    <alternativeName>
        <fullName>Melastatin-related TRP cation channel 6</fullName>
    </alternativeName>
    <component>
        <recommendedName>
            <fullName evidence="19">TRPM6 kinase, cleaved form</fullName>
        </recommendedName>
    </component>
</protein>
<gene>
    <name type="primary">TRPM6</name>
    <name type="synonym">CHAK2</name>
</gene>
<dbReference type="EC" id="2.7.11.1" evidence="13 14"/>
<dbReference type="EMBL" id="AF350881">
    <property type="protein sequence ID" value="AAK31202.2"/>
    <property type="molecule type" value="mRNA"/>
</dbReference>
<dbReference type="EMBL" id="AF448232">
    <property type="protein sequence ID" value="AAM21562.1"/>
    <property type="molecule type" value="mRNA"/>
</dbReference>
<dbReference type="EMBL" id="AY333282">
    <property type="protein sequence ID" value="AAR03487.1"/>
    <property type="molecule type" value="mRNA"/>
</dbReference>
<dbReference type="EMBL" id="AY333283">
    <property type="protein sequence ID" value="AAR03488.1"/>
    <property type="molecule type" value="mRNA"/>
</dbReference>
<dbReference type="EMBL" id="AY333284">
    <property type="protein sequence ID" value="AAR03489.1"/>
    <property type="molecule type" value="mRNA"/>
</dbReference>
<dbReference type="EMBL" id="AY333285">
    <property type="protein sequence ID" value="AAR03490.1"/>
    <property type="molecule type" value="mRNA"/>
</dbReference>
<dbReference type="EMBL" id="AY333286">
    <property type="protein sequence ID" value="AAR03491.1"/>
    <property type="molecule type" value="mRNA"/>
</dbReference>
<dbReference type="EMBL" id="AY333287">
    <property type="protein sequence ID" value="AAR03492.1"/>
    <property type="molecule type" value="mRNA"/>
</dbReference>
<dbReference type="EMBL" id="AY333288">
    <property type="protein sequence ID" value="AAR03493.1"/>
    <property type="molecule type" value="mRNA"/>
</dbReference>
<dbReference type="EMBL" id="AL354795">
    <property type="status" value="NOT_ANNOTATED_CDS"/>
    <property type="molecule type" value="Genomic_DNA"/>
</dbReference>
<dbReference type="CCDS" id="CCDS55318.1">
    <molecule id="Q9BX84-3"/>
</dbReference>
<dbReference type="CCDS" id="CCDS55319.1">
    <molecule id="Q9BX84-2"/>
</dbReference>
<dbReference type="CCDS" id="CCDS6647.1">
    <molecule id="Q9BX84-1"/>
</dbReference>
<dbReference type="RefSeq" id="NP_001170781.1">
    <molecule id="Q9BX84-2"/>
    <property type="nucleotide sequence ID" value="NM_001177310.2"/>
</dbReference>
<dbReference type="RefSeq" id="NP_001170782.1">
    <molecule id="Q9BX84-3"/>
    <property type="nucleotide sequence ID" value="NM_001177311.2"/>
</dbReference>
<dbReference type="RefSeq" id="NP_060132.3">
    <molecule id="Q9BX84-1"/>
    <property type="nucleotide sequence ID" value="NM_017662.4"/>
</dbReference>
<dbReference type="SMR" id="Q9BX84"/>
<dbReference type="BioGRID" id="126713">
    <property type="interactions" value="5"/>
</dbReference>
<dbReference type="CORUM" id="Q9BX84"/>
<dbReference type="FunCoup" id="Q9BX84">
    <property type="interactions" value="552"/>
</dbReference>
<dbReference type="IntAct" id="Q9BX84">
    <property type="interactions" value="3"/>
</dbReference>
<dbReference type="MINT" id="Q9BX84"/>
<dbReference type="STRING" id="9606.ENSP00000354006"/>
<dbReference type="BindingDB" id="Q9BX84"/>
<dbReference type="ChEMBL" id="CHEMBL1628470"/>
<dbReference type="DrugBank" id="DB14513">
    <property type="generic name" value="Magnesium"/>
</dbReference>
<dbReference type="DrugBank" id="DB09481">
    <property type="generic name" value="Magnesium carbonate"/>
</dbReference>
<dbReference type="GuidetoPHARMACOLOGY" id="498"/>
<dbReference type="TCDB" id="1.A.4.5.8">
    <property type="family name" value="the transient receptor potential ca2+/cation channel (trp-cc) family"/>
</dbReference>
<dbReference type="GlyGen" id="Q9BX84">
    <property type="glycosylation" value="1 site, 1 O-linked glycan (1 site)"/>
</dbReference>
<dbReference type="iPTMnet" id="Q9BX84"/>
<dbReference type="MetOSite" id="Q9BX84"/>
<dbReference type="PhosphoSitePlus" id="Q9BX84"/>
<dbReference type="BioMuta" id="TRPM6"/>
<dbReference type="DMDM" id="56404951"/>
<dbReference type="CPTAC" id="CPTAC-2831"/>
<dbReference type="CPTAC" id="CPTAC-2987"/>
<dbReference type="jPOST" id="Q9BX84"/>
<dbReference type="MassIVE" id="Q9BX84"/>
<dbReference type="PaxDb" id="9606-ENSP00000354006"/>
<dbReference type="PeptideAtlas" id="Q9BX84"/>
<dbReference type="ProteomicsDB" id="79380">
    <molecule id="Q9BX84-1"/>
</dbReference>
<dbReference type="ProteomicsDB" id="79381">
    <molecule id="Q9BX84-2"/>
</dbReference>
<dbReference type="ProteomicsDB" id="79382">
    <molecule id="Q9BX84-3"/>
</dbReference>
<dbReference type="ProteomicsDB" id="79383">
    <molecule id="Q9BX84-4"/>
</dbReference>
<dbReference type="ProteomicsDB" id="79384">
    <molecule id="Q9BX84-5"/>
</dbReference>
<dbReference type="ProteomicsDB" id="79385">
    <molecule id="Q9BX84-6"/>
</dbReference>
<dbReference type="ProteomicsDB" id="79386">
    <molecule id="Q9BX84-7"/>
</dbReference>
<dbReference type="ABCD" id="Q9BX84">
    <property type="antibodies" value="1 sequenced antibody"/>
</dbReference>
<dbReference type="Antibodypedia" id="2049">
    <property type="antibodies" value="136 antibodies from 24 providers"/>
</dbReference>
<dbReference type="DNASU" id="140803"/>
<dbReference type="Ensembl" id="ENST00000360774.6">
    <molecule id="Q9BX84-1"/>
    <property type="protein sequence ID" value="ENSP00000354006.1"/>
    <property type="gene ID" value="ENSG00000119121.23"/>
</dbReference>
<dbReference type="Ensembl" id="ENST00000361255.7">
    <molecule id="Q9BX84-3"/>
    <property type="protein sequence ID" value="ENSP00000354962.3"/>
    <property type="gene ID" value="ENSG00000119121.23"/>
</dbReference>
<dbReference type="Ensembl" id="ENST00000449912.6">
    <molecule id="Q9BX84-2"/>
    <property type="protein sequence ID" value="ENSP00000396672.2"/>
    <property type="gene ID" value="ENSG00000119121.23"/>
</dbReference>
<dbReference type="Ensembl" id="ENST00000715553.1">
    <molecule id="Q9BX84-4"/>
    <property type="protein sequence ID" value="ENSP00000520473.1"/>
    <property type="gene ID" value="ENSG00000119121.23"/>
</dbReference>
<dbReference type="GeneID" id="140803"/>
<dbReference type="KEGG" id="hsa:140803"/>
<dbReference type="MANE-Select" id="ENST00000360774.6">
    <property type="protein sequence ID" value="ENSP00000354006.1"/>
    <property type="RefSeq nucleotide sequence ID" value="NM_017662.5"/>
    <property type="RefSeq protein sequence ID" value="NP_060132.3"/>
</dbReference>
<dbReference type="UCSC" id="uc004ajk.1">
    <molecule id="Q9BX84-1"/>
    <property type="organism name" value="human"/>
</dbReference>
<dbReference type="AGR" id="HGNC:17995"/>
<dbReference type="CTD" id="140803"/>
<dbReference type="DisGeNET" id="140803"/>
<dbReference type="GeneCards" id="TRPM6"/>
<dbReference type="HGNC" id="HGNC:17995">
    <property type="gene designation" value="TRPM6"/>
</dbReference>
<dbReference type="HPA" id="ENSG00000119121">
    <property type="expression patterns" value="Tissue enriched (intestine)"/>
</dbReference>
<dbReference type="MalaCards" id="TRPM6"/>
<dbReference type="MIM" id="602014">
    <property type="type" value="phenotype"/>
</dbReference>
<dbReference type="MIM" id="607009">
    <property type="type" value="gene"/>
</dbReference>
<dbReference type="neXtProt" id="NX_Q9BX84"/>
<dbReference type="OpenTargets" id="ENSG00000119121"/>
<dbReference type="Orphanet" id="30924">
    <property type="disease" value="Primary hypomagnesemia with secondary hypocalcemia"/>
</dbReference>
<dbReference type="PharmGKB" id="PA38479"/>
<dbReference type="VEuPathDB" id="HostDB:ENSG00000119121"/>
<dbReference type="eggNOG" id="KOG3614">
    <property type="taxonomic scope" value="Eukaryota"/>
</dbReference>
<dbReference type="GeneTree" id="ENSGT00940000158164"/>
<dbReference type="HOGENOM" id="CLU_001390_2_0_1"/>
<dbReference type="InParanoid" id="Q9BX84"/>
<dbReference type="OMA" id="EVVQTWY"/>
<dbReference type="OrthoDB" id="301415at2759"/>
<dbReference type="PAN-GO" id="Q9BX84">
    <property type="GO annotations" value="4 GO annotations based on evolutionary models"/>
</dbReference>
<dbReference type="PhylomeDB" id="Q9BX84"/>
<dbReference type="TreeFam" id="TF314204"/>
<dbReference type="PathwayCommons" id="Q9BX84"/>
<dbReference type="Reactome" id="R-HSA-3295583">
    <property type="pathway name" value="TRP channels"/>
</dbReference>
<dbReference type="SignaLink" id="Q9BX84"/>
<dbReference type="SIGNOR" id="Q9BX84"/>
<dbReference type="BioGRID-ORCS" id="140803">
    <property type="hits" value="7 hits in 1184 CRISPR screens"/>
</dbReference>
<dbReference type="ChiTaRS" id="TRPM6">
    <property type="organism name" value="human"/>
</dbReference>
<dbReference type="GeneWiki" id="TRPM6"/>
<dbReference type="GenomeRNAi" id="140803"/>
<dbReference type="Pharos" id="Q9BX84">
    <property type="development level" value="Tchem"/>
</dbReference>
<dbReference type="PRO" id="PR:Q9BX84"/>
<dbReference type="Proteomes" id="UP000005640">
    <property type="component" value="Chromosome 9"/>
</dbReference>
<dbReference type="RNAct" id="Q9BX84">
    <property type="molecule type" value="protein"/>
</dbReference>
<dbReference type="Bgee" id="ENSG00000119121">
    <property type="expression patterns" value="Expressed in colonic mucosa and 125 other cell types or tissues"/>
</dbReference>
<dbReference type="ExpressionAtlas" id="Q9BX84">
    <property type="expression patterns" value="baseline and differential"/>
</dbReference>
<dbReference type="GO" id="GO:0016324">
    <property type="term" value="C:apical plasma membrane"/>
    <property type="evidence" value="ECO:0000314"/>
    <property type="project" value="UniProtKB"/>
</dbReference>
<dbReference type="GO" id="GO:0031526">
    <property type="term" value="C:brush border membrane"/>
    <property type="evidence" value="ECO:0007669"/>
    <property type="project" value="Ensembl"/>
</dbReference>
<dbReference type="GO" id="GO:0005634">
    <property type="term" value="C:nucleus"/>
    <property type="evidence" value="ECO:0000314"/>
    <property type="project" value="UniProtKB"/>
</dbReference>
<dbReference type="GO" id="GO:0005886">
    <property type="term" value="C:plasma membrane"/>
    <property type="evidence" value="ECO:0000314"/>
    <property type="project" value="UniProtKB"/>
</dbReference>
<dbReference type="GO" id="GO:0005524">
    <property type="term" value="F:ATP binding"/>
    <property type="evidence" value="ECO:0007669"/>
    <property type="project" value="UniProtKB-KW"/>
</dbReference>
<dbReference type="GO" id="GO:0005262">
    <property type="term" value="F:calcium channel activity"/>
    <property type="evidence" value="ECO:0000304"/>
    <property type="project" value="Reactome"/>
</dbReference>
<dbReference type="GO" id="GO:0015085">
    <property type="term" value="F:calcium ion transmembrane transporter activity"/>
    <property type="evidence" value="ECO:0000314"/>
    <property type="project" value="UniProtKB"/>
</dbReference>
<dbReference type="GO" id="GO:0015095">
    <property type="term" value="F:magnesium ion transmembrane transporter activity"/>
    <property type="evidence" value="ECO:0000314"/>
    <property type="project" value="UniProtKB"/>
</dbReference>
<dbReference type="GO" id="GO:0046872">
    <property type="term" value="F:metal ion binding"/>
    <property type="evidence" value="ECO:0007669"/>
    <property type="project" value="UniProtKB-KW"/>
</dbReference>
<dbReference type="GO" id="GO:0005261">
    <property type="term" value="F:monoatomic cation channel activity"/>
    <property type="evidence" value="ECO:0000318"/>
    <property type="project" value="GO_Central"/>
</dbReference>
<dbReference type="GO" id="GO:0106310">
    <property type="term" value="F:protein serine kinase activity"/>
    <property type="evidence" value="ECO:0007669"/>
    <property type="project" value="RHEA"/>
</dbReference>
<dbReference type="GO" id="GO:0004674">
    <property type="term" value="F:protein serine/threonine kinase activity"/>
    <property type="evidence" value="ECO:0000314"/>
    <property type="project" value="UniProtKB"/>
</dbReference>
<dbReference type="GO" id="GO:0070588">
    <property type="term" value="P:calcium ion transmembrane transport"/>
    <property type="evidence" value="ECO:0000314"/>
    <property type="project" value="UniProtKB"/>
</dbReference>
<dbReference type="GO" id="GO:1903830">
    <property type="term" value="P:magnesium ion transmembrane transport"/>
    <property type="evidence" value="ECO:0000314"/>
    <property type="project" value="UniProtKB"/>
</dbReference>
<dbReference type="GO" id="GO:0030001">
    <property type="term" value="P:metal ion transport"/>
    <property type="evidence" value="ECO:0000318"/>
    <property type="project" value="GO_Central"/>
</dbReference>
<dbReference type="GO" id="GO:0098655">
    <property type="term" value="P:monoatomic cation transmembrane transport"/>
    <property type="evidence" value="ECO:0000318"/>
    <property type="project" value="GO_Central"/>
</dbReference>
<dbReference type="GO" id="GO:0051262">
    <property type="term" value="P:protein tetramerization"/>
    <property type="evidence" value="ECO:0007669"/>
    <property type="project" value="InterPro"/>
</dbReference>
<dbReference type="GO" id="GO:0009636">
    <property type="term" value="P:response to toxic substance"/>
    <property type="evidence" value="ECO:0000314"/>
    <property type="project" value="UniProtKB"/>
</dbReference>
<dbReference type="CDD" id="cd16972">
    <property type="entry name" value="Alpha_kinase_ChaK2_TRPM6"/>
    <property type="match status" value="1"/>
</dbReference>
<dbReference type="FunFam" id="1.20.5.1010:FF:000002">
    <property type="entry name" value="Transient receptor potential cation channel subfamily M member 7"/>
    <property type="match status" value="1"/>
</dbReference>
<dbReference type="FunFam" id="3.20.200.10:FF:000001">
    <property type="entry name" value="Transient receptor potential cation channel, subfamily M, member 7"/>
    <property type="match status" value="1"/>
</dbReference>
<dbReference type="FunFam" id="3.30.200.20:FF:000129">
    <property type="entry name" value="Transient receptor potential cation channel, subfamily M, member 7"/>
    <property type="match status" value="1"/>
</dbReference>
<dbReference type="Gene3D" id="3.20.200.10">
    <property type="entry name" value="MHCK/EF2 kinase"/>
    <property type="match status" value="1"/>
</dbReference>
<dbReference type="Gene3D" id="3.30.200.20">
    <property type="entry name" value="Phosphorylase Kinase, domain 1"/>
    <property type="match status" value="1"/>
</dbReference>
<dbReference type="Gene3D" id="1.20.5.1010">
    <property type="entry name" value="TRPM, tetramerisation domain"/>
    <property type="match status" value="1"/>
</dbReference>
<dbReference type="InterPro" id="IPR004166">
    <property type="entry name" value="a-kinase_dom"/>
</dbReference>
<dbReference type="InterPro" id="IPR005821">
    <property type="entry name" value="Ion_trans_dom"/>
</dbReference>
<dbReference type="InterPro" id="IPR011009">
    <property type="entry name" value="Kinase-like_dom_sf"/>
</dbReference>
<dbReference type="InterPro" id="IPR050927">
    <property type="entry name" value="TRPM"/>
</dbReference>
<dbReference type="InterPro" id="IPR029597">
    <property type="entry name" value="TRPM6_a-kinase_dom"/>
</dbReference>
<dbReference type="InterPro" id="IPR041491">
    <property type="entry name" value="TRPM_SLOG"/>
</dbReference>
<dbReference type="InterPro" id="IPR032415">
    <property type="entry name" value="TRPM_tetra"/>
</dbReference>
<dbReference type="InterPro" id="IPR037162">
    <property type="entry name" value="TRPM_tetra_sf"/>
</dbReference>
<dbReference type="PANTHER" id="PTHR13800:SF15">
    <property type="entry name" value="TRANSIENT RECEPTOR POTENTIAL CATION CHANNEL SUBFAMILY M MEMBER 6"/>
    <property type="match status" value="1"/>
</dbReference>
<dbReference type="PANTHER" id="PTHR13800">
    <property type="entry name" value="TRANSIENT RECEPTOR POTENTIAL CATION CHANNEL, SUBFAMILY M, MEMBER 6"/>
    <property type="match status" value="1"/>
</dbReference>
<dbReference type="Pfam" id="PF02816">
    <property type="entry name" value="Alpha_kinase"/>
    <property type="match status" value="1"/>
</dbReference>
<dbReference type="Pfam" id="PF00520">
    <property type="entry name" value="Ion_trans"/>
    <property type="match status" value="1"/>
</dbReference>
<dbReference type="Pfam" id="PF18139">
    <property type="entry name" value="LSDAT_euk"/>
    <property type="match status" value="1"/>
</dbReference>
<dbReference type="Pfam" id="PF25508">
    <property type="entry name" value="TRPM2"/>
    <property type="match status" value="2"/>
</dbReference>
<dbReference type="Pfam" id="PF16519">
    <property type="entry name" value="TRPM_tetra"/>
    <property type="match status" value="1"/>
</dbReference>
<dbReference type="SMART" id="SM00811">
    <property type="entry name" value="Alpha_kinase"/>
    <property type="match status" value="1"/>
</dbReference>
<dbReference type="SUPFAM" id="SSF56112">
    <property type="entry name" value="Protein kinase-like (PK-like)"/>
    <property type="match status" value="1"/>
</dbReference>
<dbReference type="PROSITE" id="PS51158">
    <property type="entry name" value="ALPHA_KINASE"/>
    <property type="match status" value="1"/>
</dbReference>
<name>TRPM6_HUMAN</name>
<feature type="chain" id="PRO_0000215329" description="Transient receptor potential cation channel subfamily M member 6">
    <location>
        <begin position="1"/>
        <end position="2022"/>
    </location>
</feature>
<feature type="chain" id="PRO_0000461405" description="TRPM6 kinase, cleaved form" evidence="17">
    <location>
        <begin status="unknown"/>
        <end position="2022"/>
    </location>
</feature>
<feature type="topological domain" description="Cytoplasmic" evidence="4">
    <location>
        <begin position="1"/>
        <end position="741"/>
    </location>
</feature>
<feature type="transmembrane region" description="Helical" evidence="4">
    <location>
        <begin position="742"/>
        <end position="762"/>
    </location>
</feature>
<feature type="topological domain" description="Extracellular" evidence="4">
    <location>
        <begin position="763"/>
        <end position="841"/>
    </location>
</feature>
<feature type="transmembrane region" description="Helical" evidence="4">
    <location>
        <begin position="842"/>
        <end position="862"/>
    </location>
</feature>
<feature type="topological domain" description="Cytoplasmic" evidence="4">
    <location>
        <begin position="863"/>
        <end position="905"/>
    </location>
</feature>
<feature type="transmembrane region" description="Helical" evidence="4">
    <location>
        <begin position="906"/>
        <end position="926"/>
    </location>
</feature>
<feature type="topological domain" description="Extracellular" evidence="4">
    <location>
        <begin position="927"/>
        <end position="939"/>
    </location>
</feature>
<feature type="transmembrane region" description="Helical" evidence="4">
    <location>
        <begin position="940"/>
        <end position="960"/>
    </location>
</feature>
<feature type="topological domain" description="Cytoplasmic" evidence="4">
    <location>
        <begin position="961"/>
        <end position="972"/>
    </location>
</feature>
<feature type="transmembrane region" description="Helical" evidence="4">
    <location>
        <begin position="973"/>
        <end position="993"/>
    </location>
</feature>
<feature type="topological domain" description="Extracellular" evidence="4">
    <location>
        <begin position="994"/>
        <end position="1012"/>
    </location>
</feature>
<feature type="intramembrane region" description="Pore-forming" evidence="4">
    <location>
        <begin position="1013"/>
        <end position="1033"/>
    </location>
</feature>
<feature type="topological domain" description="Extracellular" evidence="4">
    <location>
        <begin position="1034"/>
        <end position="1047"/>
    </location>
</feature>
<feature type="transmembrane region" description="Helical" evidence="4">
    <location>
        <begin position="1048"/>
        <end position="1068"/>
    </location>
</feature>
<feature type="topological domain" description="Cytoplasmic" evidence="4">
    <location>
        <begin position="1069"/>
        <end position="2022"/>
    </location>
</feature>
<feature type="domain" description="Alpha-type protein kinase" evidence="5">
    <location>
        <begin position="1750"/>
        <end position="1980"/>
    </location>
</feature>
<feature type="region of interest" description="Disordered" evidence="6">
    <location>
        <begin position="1479"/>
        <end position="1516"/>
    </location>
</feature>
<feature type="region of interest" description="Disordered" evidence="6">
    <location>
        <begin position="1997"/>
        <end position="2022"/>
    </location>
</feature>
<feature type="compositionally biased region" description="Basic and acidic residues" evidence="6">
    <location>
        <begin position="1483"/>
        <end position="1493"/>
    </location>
</feature>
<feature type="compositionally biased region" description="Polar residues" evidence="6">
    <location>
        <begin position="1494"/>
        <end position="1512"/>
    </location>
</feature>
<feature type="compositionally biased region" description="Basic and acidic residues" evidence="6">
    <location>
        <begin position="1998"/>
        <end position="2016"/>
    </location>
</feature>
<feature type="active site" description="Proton acceptor" evidence="1">
    <location>
        <position position="1923"/>
    </location>
</feature>
<feature type="binding site" evidence="3">
    <location>
        <position position="1777"/>
    </location>
    <ligand>
        <name>ADP</name>
        <dbReference type="ChEBI" id="CHEBI:456216"/>
    </ligand>
</feature>
<feature type="binding site" evidence="3">
    <location>
        <position position="1778"/>
    </location>
    <ligand>
        <name>ADP</name>
        <dbReference type="ChEBI" id="CHEBI:456216"/>
    </ligand>
</feature>
<feature type="binding site" evidence="3">
    <location>
        <position position="1779"/>
    </location>
    <ligand>
        <name>ADP</name>
        <dbReference type="ChEBI" id="CHEBI:456216"/>
    </ligand>
</feature>
<feature type="binding site" evidence="3">
    <location>
        <position position="1780"/>
    </location>
    <ligand>
        <name>ADP</name>
        <dbReference type="ChEBI" id="CHEBI:456216"/>
    </ligand>
</feature>
<feature type="binding site" evidence="3">
    <location>
        <position position="1804"/>
    </location>
    <ligand>
        <name>ADP</name>
        <dbReference type="ChEBI" id="CHEBI:456216"/>
    </ligand>
</feature>
<feature type="binding site" evidence="3">
    <location>
        <position position="1876"/>
    </location>
    <ligand>
        <name>ADP</name>
        <dbReference type="ChEBI" id="CHEBI:456216"/>
    </ligand>
</feature>
<feature type="binding site" evidence="3">
    <location>
        <position position="1879"/>
    </location>
    <ligand>
        <name>ADP</name>
        <dbReference type="ChEBI" id="CHEBI:456216"/>
    </ligand>
</feature>
<feature type="binding site" evidence="3">
    <location>
        <position position="1909"/>
    </location>
    <ligand>
        <name>Zn(2+)</name>
        <dbReference type="ChEBI" id="CHEBI:29105"/>
    </ligand>
</feature>
<feature type="binding site" evidence="3">
    <location>
        <position position="1933"/>
    </location>
    <ligand>
        <name>ADP</name>
        <dbReference type="ChEBI" id="CHEBI:456216"/>
    </ligand>
</feature>
<feature type="binding site" evidence="3">
    <location>
        <position position="1966"/>
    </location>
    <ligand>
        <name>Zn(2+)</name>
        <dbReference type="ChEBI" id="CHEBI:29105"/>
    </ligand>
</feature>
<feature type="binding site" evidence="3">
    <location>
        <position position="1968"/>
    </location>
    <ligand>
        <name>Zn(2+)</name>
        <dbReference type="ChEBI" id="CHEBI:29105"/>
    </ligand>
</feature>
<feature type="binding site" evidence="3">
    <location>
        <position position="1972"/>
    </location>
    <ligand>
        <name>Zn(2+)</name>
        <dbReference type="ChEBI" id="CHEBI:29105"/>
    </ligand>
</feature>
<feature type="modified residue" description="Phosphothreonine; by autocatalysis" evidence="13">
    <location>
        <position position="1851"/>
    </location>
</feature>
<feature type="splice variant" id="VSP_012069" description="In isoform TRPM6b." evidence="18">
    <original>MKEQPVLERLQ</original>
    <variation>MIILSK</variation>
    <location>
        <begin position="1"/>
        <end position="11"/>
    </location>
</feature>
<feature type="splice variant" id="VSP_012070" description="In isoform TRPM6c." evidence="18">
    <original>MKEQPVLERLQ</original>
    <variation>MTAPVT</variation>
    <location>
        <begin position="1"/>
        <end position="11"/>
    </location>
</feature>
<feature type="splice variant" id="VSP_012071" description="In isoform M6-kinase 3." evidence="18">
    <original>R</original>
    <variation>P</variation>
    <location>
        <position position="281"/>
    </location>
</feature>
<feature type="splice variant" id="VSP_012072" description="In isoform M6-kinase 3." evidence="18">
    <location>
        <begin position="282"/>
        <end position="1734"/>
    </location>
</feature>
<feature type="splice variant" id="VSP_012073" description="In isoform M6-kinase 2." evidence="18">
    <location>
        <begin position="500"/>
        <end position="1666"/>
    </location>
</feature>
<feature type="splice variant" id="VSP_012074" description="In isoform M6-kinase 1." evidence="18">
    <location>
        <begin position="547"/>
        <end position="1595"/>
    </location>
</feature>
<feature type="splice variant" id="VSP_012075" description="In isoform TRPM6t." evidence="18">
    <original>GVGENLTDPSVIKPEVKQ</original>
    <variation>ALWFWDSMLKARLGGWRM</variation>
    <location>
        <begin position="1926"/>
        <end position="1943"/>
    </location>
</feature>
<feature type="splice variant" id="VSP_012076" description="In isoform TRPM6t." evidence="18">
    <location>
        <begin position="1944"/>
        <end position="2022"/>
    </location>
</feature>
<feature type="sequence variant" id="VAR_042387" description="In a lung adenocarcinoma sample; somatic mutation; dbSNP:rs1193127627." evidence="12">
    <original>G</original>
    <variation>V</variation>
    <location>
        <position position="75"/>
    </location>
</feature>
<feature type="sequence variant" id="VAR_019963" description="In HOMG1; abolishes channel activity. Impairs homo- and heterooligomeric formation with TRPM7 resulting in intracellular retention; dbSNP:rs121912625." evidence="7 9 10">
    <original>S</original>
    <variation>L</variation>
    <location>
        <position position="141"/>
    </location>
</feature>
<feature type="sequence variant" id="VAR_042388" description="In dbSNP:rs56155062." evidence="12">
    <original>M</original>
    <variation>I</variation>
    <location>
        <position position="338"/>
    </location>
</feature>
<feature type="sequence variant" id="VAR_071480" description="In HOMG1; abolishes channel activity; no effect on cell membrane localization." evidence="15">
    <original>L</original>
    <variation>P</variation>
    <location>
        <position position="708"/>
    </location>
</feature>
<feature type="sequence variant" id="VAR_071481" description="In HOMG1; abolishes channel activity; no effect on cell membrane localization." evidence="15">
    <original>E</original>
    <variation>G</variation>
    <location>
        <position position="872"/>
    </location>
</feature>
<feature type="sequence variant" id="VAR_052380" description="In dbSNP:rs13290391.">
    <original>F</original>
    <variation>L</variation>
    <location>
        <position position="948"/>
    </location>
</feature>
<feature type="sequence variant" id="VAR_042389" description="In a lung large cell carcinoma sample; somatic mutation." evidence="12">
    <original>W</original>
    <variation>C</variation>
    <location>
        <position position="1007"/>
    </location>
</feature>
<feature type="sequence variant" id="VAR_089905" description="In HOMG1; does not affect protein expression. Does not affect coassembly with TRPM7. Impairs channel activity of TRPM6/7 complexes." evidence="11">
    <original>P</original>
    <variation>R</variation>
    <location>
        <position position="1017"/>
    </location>
</feature>
<feature type="sequence variant" id="VAR_071482" description="In HOMG1; abolishes channel activity; no effect on cell membrane localization." evidence="15">
    <original>Y</original>
    <variation>C</variation>
    <location>
        <position position="1053"/>
    </location>
</feature>
<feature type="sequence variant" id="VAR_019964" description="In dbSNP:rs2274922.">
    <original>N</original>
    <variation>D</variation>
    <location>
        <position position="1071"/>
    </location>
</feature>
<feature type="sequence variant" id="VAR_071483" description="In HOMG1; abolishes channel activity; no effect on cell membrane localization." evidence="15">
    <original>L</original>
    <variation>P</variation>
    <location>
        <position position="1143"/>
    </location>
</feature>
<feature type="sequence variant" id="VAR_042390" description="In dbSNP:rs55694430." evidence="12">
    <original>H</original>
    <variation>R</variation>
    <location>
        <position position="1243"/>
    </location>
</feature>
<feature type="sequence variant" id="VAR_042391" description="In dbSNP:rs34608911." evidence="12">
    <original>Q</original>
    <variation>R</variation>
    <location>
        <position position="1274"/>
    </location>
</feature>
<feature type="sequence variant" id="VAR_019965" description="In dbSNP:rs3750425." evidence="12">
    <original>V</original>
    <variation>I</variation>
    <location>
        <position position="1393"/>
    </location>
</feature>
<feature type="sequence variant" id="VAR_019966" description="In dbSNP:rs2274924." evidence="12">
    <original>K</original>
    <variation>E</variation>
    <location>
        <position position="1584"/>
    </location>
</feature>
<feature type="sequence variant" id="VAR_042392" description="No effect on channel activity or cell membrane localization; dbSNP:rs55679040." evidence="12 15">
    <original>Q</original>
    <variation>R</variation>
    <location>
        <position position="1663"/>
    </location>
</feature>
<feature type="sequence variant" id="VAR_042393" description="In dbSNP:rs56254742." evidence="12">
    <original>L</original>
    <variation>S</variation>
    <location>
        <position position="1673"/>
    </location>
</feature>
<feature type="sequence variant" id="VAR_042394" description="In dbSNP:rs56290308." evidence="12">
    <original>T</original>
    <variation>I</variation>
    <location>
        <position position="1724"/>
    </location>
</feature>
<feature type="sequence variant" id="VAR_071484" description="In HOMG1; abolishes channel activity; no effect on cell membrane localization." evidence="15">
    <original>S</original>
    <variation>N</variation>
    <location>
        <position position="1754"/>
    </location>
</feature>
<feature type="mutagenesis site" description="Abolishes channel activity. Abolishes endogenous protein cleavage." evidence="17">
    <original>NLL</original>
    <variation>FAP</variation>
    <location>
        <begin position="1063"/>
        <end position="1065"/>
    </location>
</feature>
<feature type="mutagenesis site" description="Abolishes kinase activity but does not affect expression levels or binding to RACK1." evidence="13">
    <original>K</original>
    <variation>R</variation>
    <location>
        <position position="1804"/>
    </location>
</feature>
<feature type="mutagenesis site" description="Significantly decreases autophosphorylation. Does not alter binding to RACK1 but prevents inhibition by RACK1." evidence="13">
    <original>T</original>
    <variation>A</variation>
    <location>
        <position position="1851"/>
    </location>
</feature>
<feature type="mutagenesis site" description="Significantly decreases autophosphorylation. Does not alter binding to RACK1 or inhibition by RACK1." evidence="13">
    <original>T</original>
    <variation>D</variation>
    <location>
        <position position="1851"/>
    </location>
</feature>
<comment type="function">
    <text evidence="8 10 13 14 16">Bifunctional protein that combines an ion channel with an intrinsic kinase domain, enabling it to modulate cellular functions either by conducting ions through the pore or by phosphorylating downstream proteins via its kinase domain (PubMed:14576148, PubMed:16636202, PubMed:18258429, PubMed:18365021). Crucial for Mg(2+) homeostasis. Has an important role in epithelial Mg(2+) transport and in the active Mg(2+) absorption in the gut and kidney (PubMed:14576148). However, whether TRPM6 forms functional homomeric channels by itself or functions primarily as a subunit of heteromeric TRPM6-TRPM7 channels, is still under debate (PubMed:14576148, PubMed:16636202, PubMed:24385424).</text>
</comment>
<comment type="function">
    <molecule>TRPM6 kinase, cleaved form</molecule>
    <text evidence="17">The C-terminal kinase domain can be cleaved from the channel segment in a cell-type-specific fashion. The cleaved kinase fragments can translocate to the nucleus, and bind chromatin-remodeling complex proteins to ultimately phosphorylate specific Ser/Thr residues of histones known to be functionally important for cell differentiation and development.</text>
</comment>
<comment type="catalytic activity">
    <reaction evidence="14">
        <text>L-seryl-[protein] + ATP = O-phospho-L-seryl-[protein] + ADP + H(+)</text>
        <dbReference type="Rhea" id="RHEA:17989"/>
        <dbReference type="Rhea" id="RHEA-COMP:9863"/>
        <dbReference type="Rhea" id="RHEA-COMP:11604"/>
        <dbReference type="ChEBI" id="CHEBI:15378"/>
        <dbReference type="ChEBI" id="CHEBI:29999"/>
        <dbReference type="ChEBI" id="CHEBI:30616"/>
        <dbReference type="ChEBI" id="CHEBI:83421"/>
        <dbReference type="ChEBI" id="CHEBI:456216"/>
        <dbReference type="EC" id="2.7.11.1"/>
    </reaction>
</comment>
<comment type="catalytic activity">
    <reaction evidence="13 14">
        <text>L-threonyl-[protein] + ATP = O-phospho-L-threonyl-[protein] + ADP + H(+)</text>
        <dbReference type="Rhea" id="RHEA:46608"/>
        <dbReference type="Rhea" id="RHEA-COMP:11060"/>
        <dbReference type="Rhea" id="RHEA-COMP:11605"/>
        <dbReference type="ChEBI" id="CHEBI:15378"/>
        <dbReference type="ChEBI" id="CHEBI:30013"/>
        <dbReference type="ChEBI" id="CHEBI:30616"/>
        <dbReference type="ChEBI" id="CHEBI:61977"/>
        <dbReference type="ChEBI" id="CHEBI:456216"/>
        <dbReference type="EC" id="2.7.11.1"/>
    </reaction>
</comment>
<comment type="catalytic activity">
    <reaction evidence="8 10">
        <text>Mg(2+)(in) = Mg(2+)(out)</text>
        <dbReference type="Rhea" id="RHEA:29827"/>
        <dbReference type="ChEBI" id="CHEBI:18420"/>
    </reaction>
</comment>
<comment type="catalytic activity">
    <reaction evidence="8 10">
        <text>Ca(2+)(in) = Ca(2+)(out)</text>
        <dbReference type="Rhea" id="RHEA:29671"/>
        <dbReference type="ChEBI" id="CHEBI:29108"/>
    </reaction>
</comment>
<comment type="catalytic activity">
    <reaction evidence="10">
        <text>Zn(2+)(in) = Zn(2+)(out)</text>
        <dbReference type="Rhea" id="RHEA:29351"/>
        <dbReference type="ChEBI" id="CHEBI:29105"/>
    </reaction>
</comment>
<comment type="activity regulation">
    <text evidence="2 8 10 13 14 16">Strongly inhibited by intracellular Mg(2+); unlikely to be active at physiological levels of intracellular Mg(2+) (PubMed:14576148, PubMed:16636202, PubMed:24385424). In the heteromeric TRPM6-TRPM7 channels complexes, TRPM7 are able to offset the very high sensitivity of TRPM6 to cytosolic Mg(2+) to physiologically relevant concentrations, whereas TRPM6 relieve TRPM7 from the inhibitory action of Mg-ATP. Consequently, the association of TRPM6 with TRPM7 allow for high constitutive activity of TRPM6/7 in the presence of physiological levels of Mg(2+) and Mg-ATP (By similarity). The kinase activity is controlled through the autophosphorylation of a serine/threonine-rich region located to the N-terminal of the catalytic domain (PubMed:18258429, PubMed:18365021).</text>
</comment>
<comment type="subunit">
    <text evidence="9 10 11 13">Homomers (PubMed:16636202). Forms heteromers with TRPM7; TRPM6 increases the current amplitude of TRPM6/7 heteromers as compared to TRPM7 homomer (PubMed:14976260, PubMed:16636202, PubMed:17197439). Interacts (via kinase domain) with RACK1 (PubMed:18258429).</text>
</comment>
<comment type="subcellular location">
    <subcellularLocation>
        <location evidence="15">Cell membrane</location>
        <topology evidence="20">Multi-pass membrane protein</topology>
    </subcellularLocation>
    <subcellularLocation>
        <location evidence="8">Apical cell membrane</location>
        <topology evidence="20">Multi-pass membrane protein</topology>
    </subcellularLocation>
    <text evidence="9 11">TRPM6 requires the presence of TRPM7 to be targeted to the cell membrane (in HEK 293 cells).</text>
</comment>
<comment type="subcellular location">
    <molecule>TRPM6 kinase, cleaved form</molecule>
    <subcellularLocation>
        <location evidence="17">Nucleus</location>
    </subcellularLocation>
</comment>
<comment type="alternative products">
    <event type="alternative splicing"/>
    <isoform>
        <id>Q9BX84-1</id>
        <name evidence="18">TRPM6a</name>
        <sequence type="displayed"/>
    </isoform>
    <isoform>
        <id>Q9BX84-2</id>
        <name evidence="18">TRPM6b</name>
        <sequence type="described" ref="VSP_012069"/>
    </isoform>
    <isoform>
        <id>Q9BX84-3</id>
        <name evidence="18">TRPM6c</name>
        <sequence type="described" ref="VSP_012070"/>
    </isoform>
    <isoform>
        <id>Q9BX84-4</id>
        <name evidence="18">TRPM6t</name>
        <sequence type="described" ref="VSP_012075 VSP_012076"/>
    </isoform>
    <isoform>
        <id>Q9BX84-5</id>
        <name evidence="18">M6-kinase 1</name>
        <sequence type="described" ref="VSP_012074"/>
    </isoform>
    <isoform>
        <id>Q9BX84-6</id>
        <name evidence="18">M6-kinase 2</name>
        <sequence type="described" ref="VSP_012073"/>
    </isoform>
    <isoform>
        <id>Q9BX84-7</id>
        <name evidence="18">M6-kinase 3</name>
        <sequence type="described" ref="VSP_012071 VSP_012072"/>
    </isoform>
</comment>
<comment type="tissue specificity">
    <text>Highly expressed in kidney and colon. Isoform TRPM6a and isoform TRPM6b, are coexpressed with TRPM7 in kidney, and testis, and are also found in several cell lines of lung origin. Isoform TRPM6c is detected only in testis and in NCI-H510A small cell lung carcinoma cells.</text>
</comment>
<comment type="PTM">
    <text evidence="13 14">Autophosphorylated; autophosphorylation controlls the protein kinase activity of TRPM6 towards their substrates (PubMed:18258429, PubMed:18365021). Autophosphorylation of Thr-1851 in the kinase domain is essential for the inhibitory effect of RACK1 (PubMed:18258429).</text>
</comment>
<comment type="PTM">
    <text evidence="17">The C-terminus of TRPM6 is proteolytically cleaved in vivo, in a cell type-specific fashion, releasing the kinase module from the transmembrane domain. The cleaved kinase fragments are translocated to the nucleus to phosphorylate histones and regulate gene expression.</text>
</comment>
<comment type="disease" evidence="7 9 10 11 15">
    <disease id="DI-00576">
        <name>Hypomagnesemia 1</name>
        <acronym>HOMG1</acronym>
        <description>A disorder due to a primary defect in intestinal magnesium absorption. It is characterized by low levels of serum magnesium alongside with a normal renal magnesium secretion, secondary hypocalcemia and calcinocis. Affected individuals show neurologic symptoms of hypomagnesemic hypocalcemia, including seizures and muscle spasms, during infancy. Hypocalcemia is secondary to parathyroid failure resulting from magnesium deficiency. Untreated, the disorder may be fatal or may result in neurological damage.</description>
        <dbReference type="MIM" id="602014"/>
    </disease>
    <text>The disease is caused by variants affecting the gene represented in this entry.</text>
</comment>
<comment type="miscellaneous">
    <molecule>Isoform M6-kinase 1</molecule>
    <text evidence="20">Lacks the ion channel region.</text>
</comment>
<comment type="miscellaneous">
    <molecule>Isoform M6-kinase 2</molecule>
    <text evidence="20">Lacks the ion channel region.</text>
</comment>
<comment type="miscellaneous">
    <molecule>Isoform M6-kinase 3</molecule>
    <text evidence="20">Lacks the ion channel region.</text>
</comment>
<comment type="similarity">
    <text evidence="20">In the C-terminal section; belongs to the protein kinase superfamily. Alpha-type protein kinase family. ALPK subfamily.</text>
</comment>
<comment type="similarity">
    <text evidence="20">In the N-terminal section; belongs to the transient receptor (TC 1.A.4) family. LTrpC subfamily. TRPM6 sub-subfamily.</text>
</comment>
<comment type="caution">
    <text evidence="8 9 10 11 16">Whether TRPM6 forms functional homomeric channels by itself is still under debate. According to PubMed:14576148 and PubMed:16636202, TRPM6 are able to form TRPM6 channels with similar properties to those of TRPM7, with biophysical characteristics resembling those of TRPM7 including the high channel pore selectivity for divalent cations and regulation by intracellular Mg(2+) (PubMed:14576148, PubMed:16636202). In contrast, others studies report that TRPM6 does not produce functional currents by itself and TRPM6 does not efficiently form homotetramers channels in the plasma membrane, but requires TRPM7 to be co-targeted to the cell surface (PubMed:14976260, PubMed:17197439). Further, homotetramers TRPM6 are highly sensitive to intracellular free Mg(2+) and therefore unlikely to be active at physiological levels of intracellular Mg(2+) (PubMed:24385424).</text>
</comment>